<reference key="1">
    <citation type="journal article" date="2006" name="J. Bacteriol.">
        <title>Complete genome sequence of Yersinia pestis strains Antiqua and Nepal516: evidence of gene reduction in an emerging pathogen.</title>
        <authorList>
            <person name="Chain P.S.G."/>
            <person name="Hu P."/>
            <person name="Malfatti S.A."/>
            <person name="Radnedge L."/>
            <person name="Larimer F."/>
            <person name="Vergez L.M."/>
            <person name="Worsham P."/>
            <person name="Chu M.C."/>
            <person name="Andersen G.L."/>
        </authorList>
    </citation>
    <scope>NUCLEOTIDE SEQUENCE [LARGE SCALE GENOMIC DNA]</scope>
    <source>
        <strain>Antiqua</strain>
    </source>
</reference>
<accession>Q1C786</accession>
<name>SLYA_YERPA</name>
<keyword id="KW-0010">Activator</keyword>
<keyword id="KW-0238">DNA-binding</keyword>
<keyword id="KW-0678">Repressor</keyword>
<keyword id="KW-0804">Transcription</keyword>
<keyword id="KW-0805">Transcription regulation</keyword>
<sequence length="143" mass="16130">MESTLGSDLARLVRVWRALIDPRLKPLELTQTHWVTLYNINRLPPEQSQIQLAKAIGIEQPSLVRTLDQLEEKGLITRHTCANDRRAKRIKLTEQSSPIIEQVDGVICSTRKEILGGISSDEIAVLSGLIDKLEKNIIQLQTK</sequence>
<evidence type="ECO:0000255" key="1">
    <source>
        <dbReference type="HAMAP-Rule" id="MF_01819"/>
    </source>
</evidence>
<comment type="function">
    <text evidence="1">Transcription regulator that can specifically activate or repress expression of target genes.</text>
</comment>
<comment type="subunit">
    <text evidence="1">Homodimer.</text>
</comment>
<comment type="similarity">
    <text evidence="1">Belongs to the SlyA family.</text>
</comment>
<gene>
    <name evidence="1" type="primary">slyA</name>
    <name type="ordered locus">YPA_1720</name>
</gene>
<feature type="chain" id="PRO_1000070359" description="Transcriptional regulator SlyA">
    <location>
        <begin position="1"/>
        <end position="143"/>
    </location>
</feature>
<feature type="domain" description="HTH marR-type" evidence="1">
    <location>
        <begin position="2"/>
        <end position="135"/>
    </location>
</feature>
<feature type="DNA-binding region" description="H-T-H motif" evidence="1">
    <location>
        <begin position="49"/>
        <end position="72"/>
    </location>
</feature>
<dbReference type="EMBL" id="CP000308">
    <property type="protein sequence ID" value="ABG13686.1"/>
    <property type="molecule type" value="Genomic_DNA"/>
</dbReference>
<dbReference type="RefSeq" id="WP_002220304.1">
    <property type="nucleotide sequence ID" value="NC_008150.1"/>
</dbReference>
<dbReference type="SMR" id="Q1C786"/>
<dbReference type="KEGG" id="ypa:YPA_1720"/>
<dbReference type="Proteomes" id="UP000001971">
    <property type="component" value="Chromosome"/>
</dbReference>
<dbReference type="GO" id="GO:0003677">
    <property type="term" value="F:DNA binding"/>
    <property type="evidence" value="ECO:0007669"/>
    <property type="project" value="UniProtKB-UniRule"/>
</dbReference>
<dbReference type="GO" id="GO:0003700">
    <property type="term" value="F:DNA-binding transcription factor activity"/>
    <property type="evidence" value="ECO:0007669"/>
    <property type="project" value="UniProtKB-UniRule"/>
</dbReference>
<dbReference type="GO" id="GO:0006950">
    <property type="term" value="P:response to stress"/>
    <property type="evidence" value="ECO:0007669"/>
    <property type="project" value="TreeGrafter"/>
</dbReference>
<dbReference type="FunFam" id="1.10.10.10:FF:000261">
    <property type="entry name" value="Transcriptional regulator SlyA"/>
    <property type="match status" value="1"/>
</dbReference>
<dbReference type="Gene3D" id="1.10.10.10">
    <property type="entry name" value="Winged helix-like DNA-binding domain superfamily/Winged helix DNA-binding domain"/>
    <property type="match status" value="1"/>
</dbReference>
<dbReference type="HAMAP" id="MF_01819">
    <property type="entry name" value="HTH_type_SlyA"/>
    <property type="match status" value="1"/>
</dbReference>
<dbReference type="InterPro" id="IPR000835">
    <property type="entry name" value="HTH_MarR-typ"/>
</dbReference>
<dbReference type="InterPro" id="IPR039422">
    <property type="entry name" value="MarR/SlyA-like"/>
</dbReference>
<dbReference type="InterPro" id="IPR023187">
    <property type="entry name" value="Tscrpt_reg_MarR-type_CS"/>
</dbReference>
<dbReference type="InterPro" id="IPR023071">
    <property type="entry name" value="Tscrpt_reg_SlyA"/>
</dbReference>
<dbReference type="InterPro" id="IPR036388">
    <property type="entry name" value="WH-like_DNA-bd_sf"/>
</dbReference>
<dbReference type="InterPro" id="IPR036390">
    <property type="entry name" value="WH_DNA-bd_sf"/>
</dbReference>
<dbReference type="NCBIfam" id="NF002926">
    <property type="entry name" value="PRK03573.1"/>
    <property type="match status" value="1"/>
</dbReference>
<dbReference type="PANTHER" id="PTHR33164:SF64">
    <property type="entry name" value="TRANSCRIPTIONAL REGULATOR SLYA"/>
    <property type="match status" value="1"/>
</dbReference>
<dbReference type="PANTHER" id="PTHR33164">
    <property type="entry name" value="TRANSCRIPTIONAL REGULATOR, MARR FAMILY"/>
    <property type="match status" value="1"/>
</dbReference>
<dbReference type="Pfam" id="PF01047">
    <property type="entry name" value="MarR"/>
    <property type="match status" value="1"/>
</dbReference>
<dbReference type="PRINTS" id="PR00598">
    <property type="entry name" value="HTHMARR"/>
</dbReference>
<dbReference type="SMART" id="SM00347">
    <property type="entry name" value="HTH_MARR"/>
    <property type="match status" value="1"/>
</dbReference>
<dbReference type="SUPFAM" id="SSF46785">
    <property type="entry name" value="Winged helix' DNA-binding domain"/>
    <property type="match status" value="1"/>
</dbReference>
<dbReference type="PROSITE" id="PS01117">
    <property type="entry name" value="HTH_MARR_1"/>
    <property type="match status" value="1"/>
</dbReference>
<dbReference type="PROSITE" id="PS50995">
    <property type="entry name" value="HTH_MARR_2"/>
    <property type="match status" value="1"/>
</dbReference>
<protein>
    <recommendedName>
        <fullName evidence="1">Transcriptional regulator SlyA</fullName>
    </recommendedName>
</protein>
<organism>
    <name type="scientific">Yersinia pestis bv. Antiqua (strain Antiqua)</name>
    <dbReference type="NCBI Taxonomy" id="360102"/>
    <lineage>
        <taxon>Bacteria</taxon>
        <taxon>Pseudomonadati</taxon>
        <taxon>Pseudomonadota</taxon>
        <taxon>Gammaproteobacteria</taxon>
        <taxon>Enterobacterales</taxon>
        <taxon>Yersiniaceae</taxon>
        <taxon>Yersinia</taxon>
    </lineage>
</organism>
<proteinExistence type="inferred from homology"/>